<dbReference type="EMBL" id="AK122663">
    <property type="status" value="NOT_ANNOTATED_CDS"/>
    <property type="molecule type" value="mRNA"/>
</dbReference>
<dbReference type="EMBL" id="AC072054">
    <property type="status" value="NOT_ANNOTATED_CDS"/>
    <property type="molecule type" value="Genomic_DNA"/>
</dbReference>
<dbReference type="EMBL" id="AC092428">
    <property type="status" value="NOT_ANNOTATED_CDS"/>
    <property type="molecule type" value="Genomic_DNA"/>
</dbReference>
<dbReference type="EMBL" id="AC092610">
    <property type="status" value="NOT_ANNOTATED_CDS"/>
    <property type="molecule type" value="Genomic_DNA"/>
</dbReference>
<dbReference type="EMBL" id="BC038434">
    <property type="status" value="NOT_ANNOTATED_CDS"/>
    <property type="molecule type" value="mRNA"/>
</dbReference>
<dbReference type="EMBL" id="CB959941">
    <property type="status" value="NOT_ANNOTATED_CDS"/>
    <property type="molecule type" value="mRNA"/>
</dbReference>
<dbReference type="EMBL" id="AW206906">
    <property type="status" value="NOT_ANNOTATED_CDS"/>
    <property type="molecule type" value="mRNA"/>
</dbReference>
<dbReference type="CCDS" id="CCDS34591.1">
    <molecule id="P85037-1"/>
</dbReference>
<dbReference type="RefSeq" id="NP_001032242.1">
    <molecule id="P85037-1"/>
    <property type="nucleotide sequence ID" value="NM_001037165.2"/>
</dbReference>
<dbReference type="RefSeq" id="XP_011513493.1">
    <property type="nucleotide sequence ID" value="XM_011515191.2"/>
</dbReference>
<dbReference type="PDB" id="8BZM">
    <property type="method" value="X-ray"/>
    <property type="resolution" value="2.69 A"/>
    <property type="chains" value="A/E/I/J=304-398"/>
</dbReference>
<dbReference type="PDBsum" id="8BZM"/>
<dbReference type="BMRB" id="P85037"/>
<dbReference type="SMR" id="P85037"/>
<dbReference type="BioGRID" id="128769">
    <property type="interactions" value="258"/>
</dbReference>
<dbReference type="CORUM" id="P85037"/>
<dbReference type="FunCoup" id="P85037">
    <property type="interactions" value="2913"/>
</dbReference>
<dbReference type="IntAct" id="P85037">
    <property type="interactions" value="165"/>
</dbReference>
<dbReference type="MINT" id="P85037"/>
<dbReference type="STRING" id="9606.ENSP00000328720"/>
<dbReference type="GlyCosmos" id="P85037">
    <property type="glycosylation" value="28 sites, 2 glycans"/>
</dbReference>
<dbReference type="GlyGen" id="P85037">
    <property type="glycosylation" value="35 sites, 3 O-linked glycans (35 sites)"/>
</dbReference>
<dbReference type="iPTMnet" id="P85037"/>
<dbReference type="PhosphoSitePlus" id="P85037"/>
<dbReference type="SwissPalm" id="P85037"/>
<dbReference type="BioMuta" id="FOXK1"/>
<dbReference type="DMDM" id="118572324"/>
<dbReference type="jPOST" id="P85037"/>
<dbReference type="MassIVE" id="P85037"/>
<dbReference type="PaxDb" id="9606-ENSP00000328720"/>
<dbReference type="PeptideAtlas" id="P85037"/>
<dbReference type="ProteomicsDB" id="57762">
    <molecule id="P85037-1"/>
</dbReference>
<dbReference type="ProteomicsDB" id="57763">
    <molecule id="P85037-2"/>
</dbReference>
<dbReference type="Pumba" id="P85037"/>
<dbReference type="Antibodypedia" id="11250">
    <property type="antibodies" value="219 antibodies from 30 providers"/>
</dbReference>
<dbReference type="DNASU" id="221937"/>
<dbReference type="Ensembl" id="ENST00000328914.5">
    <molecule id="P85037-1"/>
    <property type="protein sequence ID" value="ENSP00000328720.4"/>
    <property type="gene ID" value="ENSG00000164916.11"/>
</dbReference>
<dbReference type="GeneID" id="221937"/>
<dbReference type="KEGG" id="hsa:221937"/>
<dbReference type="MANE-Select" id="ENST00000328914.5">
    <property type="protein sequence ID" value="ENSP00000328720.4"/>
    <property type="RefSeq nucleotide sequence ID" value="NM_001037165.2"/>
    <property type="RefSeq protein sequence ID" value="NP_001032242.1"/>
</dbReference>
<dbReference type="UCSC" id="uc003snc.2">
    <molecule id="P85037-1"/>
    <property type="organism name" value="human"/>
</dbReference>
<dbReference type="AGR" id="HGNC:23480"/>
<dbReference type="CTD" id="221937"/>
<dbReference type="DisGeNET" id="221937"/>
<dbReference type="GeneCards" id="FOXK1"/>
<dbReference type="HGNC" id="HGNC:23480">
    <property type="gene designation" value="FOXK1"/>
</dbReference>
<dbReference type="HPA" id="ENSG00000164916">
    <property type="expression patterns" value="Low tissue specificity"/>
</dbReference>
<dbReference type="MIM" id="616302">
    <property type="type" value="gene"/>
</dbReference>
<dbReference type="neXtProt" id="NX_P85037"/>
<dbReference type="OpenTargets" id="ENSG00000164916"/>
<dbReference type="PharmGKB" id="PA134978307"/>
<dbReference type="VEuPathDB" id="HostDB:ENSG00000164916"/>
<dbReference type="eggNOG" id="KOG2294">
    <property type="taxonomic scope" value="Eukaryota"/>
</dbReference>
<dbReference type="GeneTree" id="ENSGT00940000159507"/>
<dbReference type="HOGENOM" id="CLU_022344_0_0_1"/>
<dbReference type="InParanoid" id="P85037"/>
<dbReference type="OMA" id="ITRVCEV"/>
<dbReference type="OrthoDB" id="691130at2759"/>
<dbReference type="PAN-GO" id="P85037">
    <property type="GO annotations" value="3 GO annotations based on evolutionary models"/>
</dbReference>
<dbReference type="PhylomeDB" id="P85037"/>
<dbReference type="TreeFam" id="TF325718"/>
<dbReference type="PathwayCommons" id="P85037"/>
<dbReference type="Reactome" id="R-HSA-5689603">
    <property type="pathway name" value="UCH proteinases"/>
</dbReference>
<dbReference type="SignaLink" id="P85037"/>
<dbReference type="BioGRID-ORCS" id="221937">
    <property type="hits" value="103 hits in 1195 CRISPR screens"/>
</dbReference>
<dbReference type="ChiTaRS" id="FOXK1">
    <property type="organism name" value="human"/>
</dbReference>
<dbReference type="GeneWiki" id="FOXK1"/>
<dbReference type="GenomeRNAi" id="221937"/>
<dbReference type="Pharos" id="P85037">
    <property type="development level" value="Tbio"/>
</dbReference>
<dbReference type="PRO" id="PR:P85037"/>
<dbReference type="Proteomes" id="UP000005640">
    <property type="component" value="Chromosome 7"/>
</dbReference>
<dbReference type="RNAct" id="P85037">
    <property type="molecule type" value="protein"/>
</dbReference>
<dbReference type="Bgee" id="ENSG00000164916">
    <property type="expression patterns" value="Expressed in upper arm skin and 193 other cell types or tissues"/>
</dbReference>
<dbReference type="ExpressionAtlas" id="P85037">
    <property type="expression patterns" value="baseline and differential"/>
</dbReference>
<dbReference type="GO" id="GO:0000785">
    <property type="term" value="C:chromatin"/>
    <property type="evidence" value="ECO:0000247"/>
    <property type="project" value="NTNU_SB"/>
</dbReference>
<dbReference type="GO" id="GO:0005737">
    <property type="term" value="C:cytoplasm"/>
    <property type="evidence" value="ECO:0000314"/>
    <property type="project" value="UniProtKB"/>
</dbReference>
<dbReference type="GO" id="GO:0005654">
    <property type="term" value="C:nucleoplasm"/>
    <property type="evidence" value="ECO:0000304"/>
    <property type="project" value="Reactome"/>
</dbReference>
<dbReference type="GO" id="GO:0005634">
    <property type="term" value="C:nucleus"/>
    <property type="evidence" value="ECO:0000314"/>
    <property type="project" value="UniProtKB"/>
</dbReference>
<dbReference type="GO" id="GO:0071889">
    <property type="term" value="F:14-3-3 protein binding"/>
    <property type="evidence" value="ECO:0000353"/>
    <property type="project" value="UniProtKB"/>
</dbReference>
<dbReference type="GO" id="GO:0003700">
    <property type="term" value="F:DNA-binding transcription factor activity"/>
    <property type="evidence" value="ECO:0000314"/>
    <property type="project" value="UniProtKB"/>
</dbReference>
<dbReference type="GO" id="GO:0000981">
    <property type="term" value="F:DNA-binding transcription factor activity, RNA polymerase II-specific"/>
    <property type="evidence" value="ECO:0000247"/>
    <property type="project" value="NTNU_SB"/>
</dbReference>
<dbReference type="GO" id="GO:0001227">
    <property type="term" value="F:DNA-binding transcription repressor activity, RNA polymerase II-specific"/>
    <property type="evidence" value="ECO:0000314"/>
    <property type="project" value="UniProtKB"/>
</dbReference>
<dbReference type="GO" id="GO:0000978">
    <property type="term" value="F:RNA polymerase II cis-regulatory region sequence-specific DNA binding"/>
    <property type="evidence" value="ECO:0000318"/>
    <property type="project" value="GO_Central"/>
</dbReference>
<dbReference type="GO" id="GO:1990837">
    <property type="term" value="F:sequence-specific double-stranded DNA binding"/>
    <property type="evidence" value="ECO:0000314"/>
    <property type="project" value="ARUK-UCL"/>
</dbReference>
<dbReference type="GO" id="GO:0000976">
    <property type="term" value="F:transcription cis-regulatory region binding"/>
    <property type="evidence" value="ECO:0000314"/>
    <property type="project" value="UniProtKB"/>
</dbReference>
<dbReference type="GO" id="GO:0061621">
    <property type="term" value="P:canonical glycolysis"/>
    <property type="evidence" value="ECO:0000314"/>
    <property type="project" value="UniProtKB"/>
</dbReference>
<dbReference type="GO" id="GO:0030154">
    <property type="term" value="P:cell differentiation"/>
    <property type="evidence" value="ECO:0007669"/>
    <property type="project" value="UniProtKB-KW"/>
</dbReference>
<dbReference type="GO" id="GO:0001678">
    <property type="term" value="P:intracellular glucose homeostasis"/>
    <property type="evidence" value="ECO:0000314"/>
    <property type="project" value="UniProtKB"/>
</dbReference>
<dbReference type="GO" id="GO:0007517">
    <property type="term" value="P:muscle organ development"/>
    <property type="evidence" value="ECO:0007669"/>
    <property type="project" value="UniProtKB-KW"/>
</dbReference>
<dbReference type="GO" id="GO:0010507">
    <property type="term" value="P:negative regulation of autophagy"/>
    <property type="evidence" value="ECO:0000314"/>
    <property type="project" value="UniProtKB"/>
</dbReference>
<dbReference type="GO" id="GO:0045892">
    <property type="term" value="P:negative regulation of DNA-templated transcription"/>
    <property type="evidence" value="ECO:0000314"/>
    <property type="project" value="UniProtKB"/>
</dbReference>
<dbReference type="GO" id="GO:0045893">
    <property type="term" value="P:positive regulation of DNA-templated transcription"/>
    <property type="evidence" value="ECO:0000314"/>
    <property type="project" value="UniProtKB"/>
</dbReference>
<dbReference type="GO" id="GO:0010906">
    <property type="term" value="P:regulation of glucose metabolic process"/>
    <property type="evidence" value="ECO:0000314"/>
    <property type="project" value="UniProtKB"/>
</dbReference>
<dbReference type="GO" id="GO:0006357">
    <property type="term" value="P:regulation of transcription by RNA polymerase II"/>
    <property type="evidence" value="ECO:0000318"/>
    <property type="project" value="GO_Central"/>
</dbReference>
<dbReference type="GO" id="GO:0042594">
    <property type="term" value="P:response to starvation"/>
    <property type="evidence" value="ECO:0000314"/>
    <property type="project" value="UniProtKB"/>
</dbReference>
<dbReference type="CDD" id="cd20054">
    <property type="entry name" value="FH_FOXK1"/>
    <property type="match status" value="1"/>
</dbReference>
<dbReference type="CDD" id="cd22722">
    <property type="entry name" value="FHA_FOXK1"/>
    <property type="match status" value="1"/>
</dbReference>
<dbReference type="FunFam" id="2.60.200.20:FF:000049">
    <property type="entry name" value="Forkhead box protein K1"/>
    <property type="match status" value="1"/>
</dbReference>
<dbReference type="FunFam" id="1.10.10.10:FF:000030">
    <property type="entry name" value="Forkhead box protein K2"/>
    <property type="match status" value="1"/>
</dbReference>
<dbReference type="Gene3D" id="2.60.200.20">
    <property type="match status" value="1"/>
</dbReference>
<dbReference type="Gene3D" id="1.10.10.10">
    <property type="entry name" value="Winged helix-like DNA-binding domain superfamily/Winged helix DNA-binding domain"/>
    <property type="match status" value="1"/>
</dbReference>
<dbReference type="InterPro" id="IPR047394">
    <property type="entry name" value="FH_FOXK1"/>
</dbReference>
<dbReference type="InterPro" id="IPR000253">
    <property type="entry name" value="FHA_dom"/>
</dbReference>
<dbReference type="InterPro" id="IPR001766">
    <property type="entry name" value="Fork_head_dom"/>
</dbReference>
<dbReference type="InterPro" id="IPR008984">
    <property type="entry name" value="SMAD_FHA_dom_sf"/>
</dbReference>
<dbReference type="InterPro" id="IPR018122">
    <property type="entry name" value="TF_fork_head_CS_1"/>
</dbReference>
<dbReference type="InterPro" id="IPR030456">
    <property type="entry name" value="TF_fork_head_CS_2"/>
</dbReference>
<dbReference type="InterPro" id="IPR036388">
    <property type="entry name" value="WH-like_DNA-bd_sf"/>
</dbReference>
<dbReference type="InterPro" id="IPR036390">
    <property type="entry name" value="WH_DNA-bd_sf"/>
</dbReference>
<dbReference type="PANTHER" id="PTHR45881">
    <property type="entry name" value="CHECKPOINT SUPPRESSOR 1-LIKE, ISOFORM A-RELATED"/>
    <property type="match status" value="1"/>
</dbReference>
<dbReference type="PANTHER" id="PTHR45881:SF4">
    <property type="entry name" value="FORKHEAD BOX PROTEIN K1"/>
    <property type="match status" value="1"/>
</dbReference>
<dbReference type="Pfam" id="PF00498">
    <property type="entry name" value="FHA"/>
    <property type="match status" value="1"/>
</dbReference>
<dbReference type="Pfam" id="PF00250">
    <property type="entry name" value="Forkhead"/>
    <property type="match status" value="1"/>
</dbReference>
<dbReference type="PRINTS" id="PR00053">
    <property type="entry name" value="FORKHEAD"/>
</dbReference>
<dbReference type="SMART" id="SM00339">
    <property type="entry name" value="FH"/>
    <property type="match status" value="1"/>
</dbReference>
<dbReference type="SMART" id="SM00240">
    <property type="entry name" value="FHA"/>
    <property type="match status" value="1"/>
</dbReference>
<dbReference type="SUPFAM" id="SSF49879">
    <property type="entry name" value="SMAD/FHA domain"/>
    <property type="match status" value="1"/>
</dbReference>
<dbReference type="SUPFAM" id="SSF46785">
    <property type="entry name" value="Winged helix' DNA-binding domain"/>
    <property type="match status" value="1"/>
</dbReference>
<dbReference type="PROSITE" id="PS50006">
    <property type="entry name" value="FHA_DOMAIN"/>
    <property type="match status" value="1"/>
</dbReference>
<dbReference type="PROSITE" id="PS00657">
    <property type="entry name" value="FORK_HEAD_1"/>
    <property type="match status" value="1"/>
</dbReference>
<dbReference type="PROSITE" id="PS00658">
    <property type="entry name" value="FORK_HEAD_2"/>
    <property type="match status" value="1"/>
</dbReference>
<dbReference type="PROSITE" id="PS50039">
    <property type="entry name" value="FORK_HEAD_3"/>
    <property type="match status" value="1"/>
</dbReference>
<comment type="function">
    <text evidence="1 6 7 9 10 11">Transcriptional regulator involved in different processes such as glucose metabolism, aerobic glycolysis, muscle cell differentiation and autophagy (By similarity). Recognizes and binds the forkhead DNA sequence motif (5'-GTAAACA-3') and can both act as a transcription activator or repressor, depending on the context (PubMed:17670796). Together with FOXK2, acts as a key regulator of metabolic reprogramming towards aerobic glycolysis, a process in which glucose is converted to lactate in the presence of oxygen (By similarity). Acts by promoting expression of enzymes for glycolysis (such as hexokinase-2 (HK2), phosphofructokinase, pyruvate kinase (PKLR) and lactate dehydrogenase), while suppressing further oxidation of pyruvate in the mitochondria by up-regulating pyruvate dehydrogenase kinases PDK1 and PDK4 (By similarity). Probably plays a role in gluconeogenesis during overnight fasting, when lactate from white adipose tissue and muscle is the main substrate (By similarity). Involved in mTORC1-mediated metabolic reprogramming: in response to mTORC1 signaling, translocates into the nucleus and regulates the expression of genes associated with glycolysis and downstream anabolic pathways, such as HIF1A, thereby regulating glucose metabolism (By similarity). Together with FOXK2, acts as a negative regulator of autophagy in skeletal muscle: in response to starvation, enters the nucleus, binds the promoters of autophagy genes and represses their expression, preventing proteolysis of skeletal muscle proteins (By similarity). Acts as a transcriptional regulator of the myogenic progenitor cell population in skeletal muscle (By similarity). Binds to the upstream enhancer region (CCAC box) of myoglobin (MB) gene, regulating the myogenic progenitor cell population (By similarity). Promotes muscle progenitor cell proliferation by repressing the transcriptional activity of FOXO4, thereby inhibiting myogenic differentiation (By similarity). Involved in remodeling processes of adult muscles that occur in response to physiological stimuli (By similarity). Required to correct temporal orchestration of molecular and cellular events necessary for muscle repair (By similarity). Represses myogenic differentiation by inhibiting MEFC activity (By similarity). Positively regulates Wnt/beta-catenin signaling by translocating DVL into the nucleus (PubMed:25805136). Reduces virus replication, probably by binding the interferon stimulated response element (ISRE) to promote antiviral gene expression (PubMed:25852164). Accessory component of the polycomb repressive deubiquitinase (PR-DUB) complex; recruits the PR-DUB complex to specific FOXK1-bound genes (PubMed:24634419, PubMed:30664650).</text>
</comment>
<comment type="subunit">
    <text evidence="1 6 7 8 9 11 16">Interacts with SIN3A and SIN3B (via PAH2) to form a complex which represses transcription (By similarity). Component of SIN3A-, but not SIN3B-, containing multiprotein complexes (By similarity). Interacts with FOXO4 and MEF2C; both interactions inhibit FOXO4 and MEF2C transactivation activity (By similarity). Interacts (when phosphorylated) with YWHAE/14-3-3-epsilon; promotes sequestration in the cytoplasm and leads to impaired ability to bind DNA (By similarity). Interacts with FHL2 (By similarity). Interacts with SRF (PubMed:17670796). Interacts with DVL2 and DVL3; the interaction induces DVL2 nuclear translocation (PubMed:25805136). Interacts with BAP1 (when phosphorylated) (PubMed:25451922). Accessory component of the polycomb repressive deubiquitinase (PR-DUB) complex, at least composed of BAP1, one of ASXL1, ASXL2 or (probably) ASXL3 and one of MBD5 or MBD6 (PubMed:24634419, PubMed:30664650). The PR-DUB core associates with a number of accessory proteins, including FOXK1, FOXK2, KDM1B, HCFC1 and OGT (Probable) (PubMed:30664650).</text>
</comment>
<comment type="interaction">
    <interactant intactId="EBI-2509974">
        <id>P85037</id>
    </interactant>
    <interactant intactId="EBI-1644164">
        <id>O43524</id>
        <label>FOXO3</label>
    </interactant>
    <organismsDiffer>false</organismsDiffer>
    <experiments>2</experiments>
</comment>
<comment type="interaction">
    <interactant intactId="EBI-2509974">
        <id>P85037</id>
    </interactant>
    <interactant intactId="EBI-2866589">
        <id>P14316</id>
        <label>IRF2</label>
    </interactant>
    <organismsDiffer>false</organismsDiffer>
    <experiments>4</experiments>
</comment>
<comment type="subcellular location">
    <subcellularLocation>
        <location evidence="9 10">Nucleus</location>
    </subcellularLocation>
    <subcellularLocation>
        <location evidence="9 10">Cytoplasm</location>
    </subcellularLocation>
    <text evidence="1 10">Translocation to the nucleus is regulated by phosphorylation: phosphorylation by GSK3 (GSK3A or GSK3B) promotes interaction with 14-3-3 proteins and sequestration in the cytoplasm. Dephosphorylation promotes translocation to the nucleus (By similarity). Accumulates in the nucleus upon viral infection (PubMed:25852164).</text>
</comment>
<comment type="alternative products">
    <event type="alternative splicing"/>
    <isoform>
        <id>P85037-1</id>
        <name evidence="12 13">1</name>
        <name evidence="13">a</name>
        <sequence type="displayed"/>
    </isoform>
    <isoform>
        <id>P85037-2</id>
        <name evidence="13">2</name>
        <name evidence="13">b</name>
        <sequence type="described" ref="VSP_052239 VSP_052240"/>
    </isoform>
</comment>
<comment type="tissue specificity">
    <text evidence="5">Expressed both developing and adult tissues (PubMed:15289879). In adults, significant expression is seen in tumors of the brain, colon and lymph node (PubMed:15289879).</text>
</comment>
<comment type="PTM">
    <text evidence="1">Phosphorylation by GSK3 (GSK3A or GSK3B) promotes interaction with YWHAE/14-3-3-epsilon and retention in the cytoplasm. In response to mTORC1 signaling, phosphorylation by GSK3 is prevented, leading to translocation to the nucleus.</text>
</comment>
<keyword id="KW-0002">3D-structure</keyword>
<keyword id="KW-0007">Acetylation</keyword>
<keyword id="KW-0010">Activator</keyword>
<keyword id="KW-0025">Alternative splicing</keyword>
<keyword id="KW-0963">Cytoplasm</keyword>
<keyword id="KW-0217">Developmental protein</keyword>
<keyword id="KW-0221">Differentiation</keyword>
<keyword id="KW-0238">DNA-binding</keyword>
<keyword id="KW-0945">Host-virus interaction</keyword>
<keyword id="KW-0488">Methylation</keyword>
<keyword id="KW-0517">Myogenesis</keyword>
<keyword id="KW-0539">Nucleus</keyword>
<keyword id="KW-0597">Phosphoprotein</keyword>
<keyword id="KW-1267">Proteomics identification</keyword>
<keyword id="KW-1185">Reference proteome</keyword>
<keyword id="KW-0678">Repressor</keyword>
<keyword id="KW-0804">Transcription</keyword>
<keyword id="KW-0805">Transcription regulation</keyword>
<keyword id="KW-0833">Ubl conjugation pathway</keyword>
<gene>
    <name evidence="12 13 17" type="primary">FOXK1</name>
    <name evidence="13" type="synonym">MNF</name>
</gene>
<name>FOXK1_HUMAN</name>
<protein>
    <recommendedName>
        <fullName evidence="12 13">Forkhead box protein K1</fullName>
    </recommendedName>
    <alternativeName>
        <fullName evidence="13">Myocyte nuclear factor</fullName>
        <shortName evidence="13">MNF</shortName>
    </alternativeName>
</protein>
<reference key="1">
    <citation type="journal article" date="2004" name="Nat. Genet.">
        <title>Complete sequencing and characterization of 21,243 full-length human cDNAs.</title>
        <authorList>
            <person name="Ota T."/>
            <person name="Suzuki Y."/>
            <person name="Nishikawa T."/>
            <person name="Otsuki T."/>
            <person name="Sugiyama T."/>
            <person name="Irie R."/>
            <person name="Wakamatsu A."/>
            <person name="Hayashi K."/>
            <person name="Sato H."/>
            <person name="Nagai K."/>
            <person name="Kimura K."/>
            <person name="Makita H."/>
            <person name="Sekine M."/>
            <person name="Obayashi M."/>
            <person name="Nishi T."/>
            <person name="Shibahara T."/>
            <person name="Tanaka T."/>
            <person name="Ishii S."/>
            <person name="Yamamoto J."/>
            <person name="Saito K."/>
            <person name="Kawai Y."/>
            <person name="Isono Y."/>
            <person name="Nakamura Y."/>
            <person name="Nagahari K."/>
            <person name="Murakami K."/>
            <person name="Yasuda T."/>
            <person name="Iwayanagi T."/>
            <person name="Wagatsuma M."/>
            <person name="Shiratori A."/>
            <person name="Sudo H."/>
            <person name="Hosoiri T."/>
            <person name="Kaku Y."/>
            <person name="Kodaira H."/>
            <person name="Kondo H."/>
            <person name="Sugawara M."/>
            <person name="Takahashi M."/>
            <person name="Kanda K."/>
            <person name="Yokoi T."/>
            <person name="Furuya T."/>
            <person name="Kikkawa E."/>
            <person name="Omura Y."/>
            <person name="Abe K."/>
            <person name="Kamihara K."/>
            <person name="Katsuta N."/>
            <person name="Sato K."/>
            <person name="Tanikawa M."/>
            <person name="Yamazaki M."/>
            <person name="Ninomiya K."/>
            <person name="Ishibashi T."/>
            <person name="Yamashita H."/>
            <person name="Murakawa K."/>
            <person name="Fujimori K."/>
            <person name="Tanai H."/>
            <person name="Kimata M."/>
            <person name="Watanabe M."/>
            <person name="Hiraoka S."/>
            <person name="Chiba Y."/>
            <person name="Ishida S."/>
            <person name="Ono Y."/>
            <person name="Takiguchi S."/>
            <person name="Watanabe S."/>
            <person name="Yosida M."/>
            <person name="Hotuta T."/>
            <person name="Kusano J."/>
            <person name="Kanehori K."/>
            <person name="Takahashi-Fujii A."/>
            <person name="Hara H."/>
            <person name="Tanase T.-O."/>
            <person name="Nomura Y."/>
            <person name="Togiya S."/>
            <person name="Komai F."/>
            <person name="Hara R."/>
            <person name="Takeuchi K."/>
            <person name="Arita M."/>
            <person name="Imose N."/>
            <person name="Musashino K."/>
            <person name="Yuuki H."/>
            <person name="Oshima A."/>
            <person name="Sasaki N."/>
            <person name="Aotsuka S."/>
            <person name="Yoshikawa Y."/>
            <person name="Matsunawa H."/>
            <person name="Ichihara T."/>
            <person name="Shiohata N."/>
            <person name="Sano S."/>
            <person name="Moriya S."/>
            <person name="Momiyama H."/>
            <person name="Satoh N."/>
            <person name="Takami S."/>
            <person name="Terashima Y."/>
            <person name="Suzuki O."/>
            <person name="Nakagawa S."/>
            <person name="Senoh A."/>
            <person name="Mizoguchi H."/>
            <person name="Goto Y."/>
            <person name="Shimizu F."/>
            <person name="Wakebe H."/>
            <person name="Hishigaki H."/>
            <person name="Watanabe T."/>
            <person name="Sugiyama A."/>
            <person name="Takemoto M."/>
            <person name="Kawakami B."/>
            <person name="Yamazaki M."/>
            <person name="Watanabe K."/>
            <person name="Kumagai A."/>
            <person name="Itakura S."/>
            <person name="Fukuzumi Y."/>
            <person name="Fujimori Y."/>
            <person name="Komiyama M."/>
            <person name="Tashiro H."/>
            <person name="Tanigami A."/>
            <person name="Fujiwara T."/>
            <person name="Ono T."/>
            <person name="Yamada K."/>
            <person name="Fujii Y."/>
            <person name="Ozaki K."/>
            <person name="Hirao M."/>
            <person name="Ohmori Y."/>
            <person name="Kawabata A."/>
            <person name="Hikiji T."/>
            <person name="Kobatake N."/>
            <person name="Inagaki H."/>
            <person name="Ikema Y."/>
            <person name="Okamoto S."/>
            <person name="Okitani R."/>
            <person name="Kawakami T."/>
            <person name="Noguchi S."/>
            <person name="Itoh T."/>
            <person name="Shigeta K."/>
            <person name="Senba T."/>
            <person name="Matsumura K."/>
            <person name="Nakajima Y."/>
            <person name="Mizuno T."/>
            <person name="Morinaga M."/>
            <person name="Sasaki M."/>
            <person name="Togashi T."/>
            <person name="Oyama M."/>
            <person name="Hata H."/>
            <person name="Watanabe M."/>
            <person name="Komatsu T."/>
            <person name="Mizushima-Sugano J."/>
            <person name="Satoh T."/>
            <person name="Shirai Y."/>
            <person name="Takahashi Y."/>
            <person name="Nakagawa K."/>
            <person name="Okumura K."/>
            <person name="Nagase T."/>
            <person name="Nomura N."/>
            <person name="Kikuchi H."/>
            <person name="Masuho Y."/>
            <person name="Yamashita R."/>
            <person name="Nakai K."/>
            <person name="Yada T."/>
            <person name="Nakamura Y."/>
            <person name="Ohara O."/>
            <person name="Isogai T."/>
            <person name="Sugano S."/>
        </authorList>
    </citation>
    <scope>NUCLEOTIDE SEQUENCE [LARGE SCALE MRNA] (ISOFORM 1)</scope>
    <source>
        <tissue>Testis</tissue>
    </source>
</reference>
<reference key="2">
    <citation type="journal article" date="2003" name="Nature">
        <title>The DNA sequence of human chromosome 7.</title>
        <authorList>
            <person name="Hillier L.W."/>
            <person name="Fulton R.S."/>
            <person name="Fulton L.A."/>
            <person name="Graves T.A."/>
            <person name="Pepin K.H."/>
            <person name="Wagner-McPherson C."/>
            <person name="Layman D."/>
            <person name="Maas J."/>
            <person name="Jaeger S."/>
            <person name="Walker R."/>
            <person name="Wylie K."/>
            <person name="Sekhon M."/>
            <person name="Becker M.C."/>
            <person name="O'Laughlin M.D."/>
            <person name="Schaller M.E."/>
            <person name="Fewell G.A."/>
            <person name="Delehaunty K.D."/>
            <person name="Miner T.L."/>
            <person name="Nash W.E."/>
            <person name="Cordes M."/>
            <person name="Du H."/>
            <person name="Sun H."/>
            <person name="Edwards J."/>
            <person name="Bradshaw-Cordum H."/>
            <person name="Ali J."/>
            <person name="Andrews S."/>
            <person name="Isak A."/>
            <person name="Vanbrunt A."/>
            <person name="Nguyen C."/>
            <person name="Du F."/>
            <person name="Lamar B."/>
            <person name="Courtney L."/>
            <person name="Kalicki J."/>
            <person name="Ozersky P."/>
            <person name="Bielicki L."/>
            <person name="Scott K."/>
            <person name="Holmes A."/>
            <person name="Harkins R."/>
            <person name="Harris A."/>
            <person name="Strong C.M."/>
            <person name="Hou S."/>
            <person name="Tomlinson C."/>
            <person name="Dauphin-Kohlberg S."/>
            <person name="Kozlowicz-Reilly A."/>
            <person name="Leonard S."/>
            <person name="Rohlfing T."/>
            <person name="Rock S.M."/>
            <person name="Tin-Wollam A.-M."/>
            <person name="Abbott A."/>
            <person name="Minx P."/>
            <person name="Maupin R."/>
            <person name="Strowmatt C."/>
            <person name="Latreille P."/>
            <person name="Miller N."/>
            <person name="Johnson D."/>
            <person name="Murray J."/>
            <person name="Woessner J.P."/>
            <person name="Wendl M.C."/>
            <person name="Yang S.-P."/>
            <person name="Schultz B.R."/>
            <person name="Wallis J.W."/>
            <person name="Spieth J."/>
            <person name="Bieri T.A."/>
            <person name="Nelson J.O."/>
            <person name="Berkowicz N."/>
            <person name="Wohldmann P.E."/>
            <person name="Cook L.L."/>
            <person name="Hickenbotham M.T."/>
            <person name="Eldred J."/>
            <person name="Williams D."/>
            <person name="Bedell J.A."/>
            <person name="Mardis E.R."/>
            <person name="Clifton S.W."/>
            <person name="Chissoe S.L."/>
            <person name="Marra M.A."/>
            <person name="Raymond C."/>
            <person name="Haugen E."/>
            <person name="Gillett W."/>
            <person name="Zhou Y."/>
            <person name="James R."/>
            <person name="Phelps K."/>
            <person name="Iadanoto S."/>
            <person name="Bubb K."/>
            <person name="Simms E."/>
            <person name="Levy R."/>
            <person name="Clendenning J."/>
            <person name="Kaul R."/>
            <person name="Kent W.J."/>
            <person name="Furey T.S."/>
            <person name="Baertsch R.A."/>
            <person name="Brent M.R."/>
            <person name="Keibler E."/>
            <person name="Flicek P."/>
            <person name="Bork P."/>
            <person name="Suyama M."/>
            <person name="Bailey J.A."/>
            <person name="Portnoy M.E."/>
            <person name="Torrents D."/>
            <person name="Chinwalla A.T."/>
            <person name="Gish W.R."/>
            <person name="Eddy S.R."/>
            <person name="McPherson J.D."/>
            <person name="Olson M.V."/>
            <person name="Eichler E.E."/>
            <person name="Green E.D."/>
            <person name="Waterston R.H."/>
            <person name="Wilson R.K."/>
        </authorList>
    </citation>
    <scope>NUCLEOTIDE SEQUENCE [LARGE SCALE GENOMIC DNA]</scope>
</reference>
<reference key="3">
    <citation type="journal article" date="2004" name="Genome Res.">
        <title>The status, quality, and expansion of the NIH full-length cDNA project: the Mammalian Gene Collection (MGC).</title>
        <authorList>
            <consortium name="The MGC Project Team"/>
        </authorList>
    </citation>
    <scope>NUCLEOTIDE SEQUENCE [LARGE SCALE MRNA] (ISOFORM 2)</scope>
    <scope>NUCLEOTIDE SEQUENCE [LARGE SCALE MRNA] OF 1-169 (ISOFORM 1)</scope>
    <source>
        <tissue>Brain</tissue>
        <tissue>Placenta</tissue>
    </source>
</reference>
<reference key="4">
    <citation type="submission" date="1999-12" db="EMBL/GenBank/DDBJ databases">
        <authorList>
            <consortium name="The Cancer Genome Anatomy Project (CGAP) at the National Cancer Institute"/>
        </authorList>
    </citation>
    <scope>NUCLEOTIDE SEQUENCE [LARGE SCALE MRNA] OF 95-238 (ISOFORM 1)</scope>
    <source>
        <tissue>Lung</tissue>
    </source>
</reference>
<reference key="5">
    <citation type="journal article" date="2004" name="Int. J. Mol. Med.">
        <title>Identification and characterization of human FOXK1 gene in silico.</title>
        <authorList>
            <person name="Katoh M."/>
            <person name="Katoh M."/>
        </authorList>
    </citation>
    <scope>IDENTIFICATION (ISOFORM 1)</scope>
</reference>
<reference key="6">
    <citation type="journal article" date="2004" name="Int. J. Oncol.">
        <title>Identification and characterization of a novel human FOXK1 gene in silico.</title>
        <authorList>
            <person name="Huang J.T."/>
            <person name="Lee V."/>
        </authorList>
    </citation>
    <scope>IDENTIFICATION (ISOFORMS 1 AND 2)</scope>
    <scope>TISSUE SPECIFICITY</scope>
</reference>
<reference key="7">
    <citation type="journal article" date="2006" name="Cell">
        <title>Global, in vivo, and site-specific phosphorylation dynamics in signaling networks.</title>
        <authorList>
            <person name="Olsen J.V."/>
            <person name="Blagoev B."/>
            <person name="Gnad F."/>
            <person name="Macek B."/>
            <person name="Kumar C."/>
            <person name="Mortensen P."/>
            <person name="Mann M."/>
        </authorList>
    </citation>
    <scope>PHOSPHORYLATION [LARGE SCALE ANALYSIS] AT SER-213; SER-223; SER-416; THR-436 AND SER-441</scope>
    <scope>IDENTIFICATION BY MASS SPECTROMETRY [LARGE SCALE ANALYSIS]</scope>
    <source>
        <tissue>Cervix carcinoma</tissue>
    </source>
</reference>
<reference key="8">
    <citation type="journal article" date="2007" name="Nucleic Acids Res.">
        <title>Functional interactions between the Forkhead transcription factor FOXK1 and the MADS-box protein SRF.</title>
        <authorList>
            <person name="Freddie C.T."/>
            <person name="Ji Z."/>
            <person name="Marais A."/>
            <person name="Sharrocks A.D."/>
        </authorList>
    </citation>
    <scope>FUNCTION</scope>
    <scope>DNA-BINDING</scope>
    <scope>MUTAGENESIS OF HIS-355</scope>
</reference>
<reference key="9">
    <citation type="journal article" date="2008" name="J. Proteome Res.">
        <title>Combining protein-based IMAC, peptide-based IMAC, and MudPIT for efficient phosphoproteomic analysis.</title>
        <authorList>
            <person name="Cantin G.T."/>
            <person name="Yi W."/>
            <person name="Lu B."/>
            <person name="Park S.K."/>
            <person name="Xu T."/>
            <person name="Lee J.-D."/>
            <person name="Yates J.R. III"/>
        </authorList>
    </citation>
    <scope>IDENTIFICATION BY MASS SPECTROMETRY [LARGE SCALE ANALYSIS]</scope>
    <source>
        <tissue>Cervix carcinoma</tissue>
    </source>
</reference>
<reference key="10">
    <citation type="journal article" date="2008" name="Proc. Natl. Acad. Sci. U.S.A.">
        <title>A quantitative atlas of mitotic phosphorylation.</title>
        <authorList>
            <person name="Dephoure N."/>
            <person name="Zhou C."/>
            <person name="Villen J."/>
            <person name="Beausoleil S.A."/>
            <person name="Bakalarski C.E."/>
            <person name="Elledge S.J."/>
            <person name="Gygi S.P."/>
        </authorList>
    </citation>
    <scope>PHOSPHORYLATION [LARGE SCALE ANALYSIS] AT SER-213; SER-223; SER-239; SER-243; SER-253; SER-257; SER-416; SER-428; SER-441 AND SER-445</scope>
    <scope>IDENTIFICATION BY MASS SPECTROMETRY [LARGE SCALE ANALYSIS]</scope>
    <source>
        <tissue>Cervix carcinoma</tissue>
    </source>
</reference>
<reference key="11">
    <citation type="journal article" date="2009" name="Anal. Chem.">
        <title>Lys-N and trypsin cover complementary parts of the phosphoproteome in a refined SCX-based approach.</title>
        <authorList>
            <person name="Gauci S."/>
            <person name="Helbig A.O."/>
            <person name="Slijper M."/>
            <person name="Krijgsveld J."/>
            <person name="Heck A.J."/>
            <person name="Mohammed S."/>
        </authorList>
    </citation>
    <scope>ACETYLATION [LARGE SCALE ANALYSIS] AT ALA-2</scope>
    <scope>CLEAVAGE OF INITIATOR METHIONINE [LARGE SCALE ANALYSIS]</scope>
    <scope>IDENTIFICATION BY MASS SPECTROMETRY [LARGE SCALE ANALYSIS]</scope>
</reference>
<reference key="12">
    <citation type="journal article" date="2009" name="Sci. Signal.">
        <title>Quantitative phosphoproteomic analysis of T cell receptor signaling reveals system-wide modulation of protein-protein interactions.</title>
        <authorList>
            <person name="Mayya V."/>
            <person name="Lundgren D.H."/>
            <person name="Hwang S.-I."/>
            <person name="Rezaul K."/>
            <person name="Wu L."/>
            <person name="Eng J.K."/>
            <person name="Rodionov V."/>
            <person name="Han D.K."/>
        </authorList>
    </citation>
    <scope>IDENTIFICATION BY MASS SPECTROMETRY [LARGE SCALE ANALYSIS]</scope>
    <source>
        <tissue>Leukemic T-cell</tissue>
    </source>
</reference>
<reference key="13">
    <citation type="journal article" date="2010" name="Sci. Signal.">
        <title>Quantitative phosphoproteomics reveals widespread full phosphorylation site occupancy during mitosis.</title>
        <authorList>
            <person name="Olsen J.V."/>
            <person name="Vermeulen M."/>
            <person name="Santamaria A."/>
            <person name="Kumar C."/>
            <person name="Miller M.L."/>
            <person name="Jensen L.J."/>
            <person name="Gnad F."/>
            <person name="Cox J."/>
            <person name="Jensen T.S."/>
            <person name="Nigg E.A."/>
            <person name="Brunak S."/>
            <person name="Mann M."/>
        </authorList>
    </citation>
    <scope>PHOSPHORYLATION [LARGE SCALE ANALYSIS] AT SER-101; SER-299; SER-416; SER-428 AND SER-445</scope>
    <scope>IDENTIFICATION BY MASS SPECTROMETRY [LARGE SCALE ANALYSIS]</scope>
    <source>
        <tissue>Cervix carcinoma</tissue>
    </source>
</reference>
<reference key="14">
    <citation type="journal article" date="2011" name="BMC Syst. Biol.">
        <title>Initial characterization of the human central proteome.</title>
        <authorList>
            <person name="Burkard T.R."/>
            <person name="Planyavsky M."/>
            <person name="Kaupe I."/>
            <person name="Breitwieser F.P."/>
            <person name="Buerckstuemmer T."/>
            <person name="Bennett K.L."/>
            <person name="Superti-Furga G."/>
            <person name="Colinge J."/>
        </authorList>
    </citation>
    <scope>IDENTIFICATION BY MASS SPECTROMETRY [LARGE SCALE ANALYSIS]</scope>
</reference>
<reference key="15">
    <citation type="journal article" date="2011" name="Sci. Signal.">
        <title>System-wide temporal characterization of the proteome and phosphoproteome of human embryonic stem cell differentiation.</title>
        <authorList>
            <person name="Rigbolt K.T."/>
            <person name="Prokhorova T.A."/>
            <person name="Akimov V."/>
            <person name="Henningsen J."/>
            <person name="Johansen P.T."/>
            <person name="Kratchmarova I."/>
            <person name="Kassem M."/>
            <person name="Mann M."/>
            <person name="Olsen J.V."/>
            <person name="Blagoev B."/>
        </authorList>
    </citation>
    <scope>PHOSPHORYLATION [LARGE SCALE ANALYSIS] AT SER-213 AND SER-223</scope>
    <scope>IDENTIFICATION BY MASS SPECTROMETRY [LARGE SCALE ANALYSIS]</scope>
</reference>
<reference key="16">
    <citation type="journal article" date="2012" name="Proc. Natl. Acad. Sci. U.S.A.">
        <title>N-terminal acetylome analyses and functional insights of the N-terminal acetyltransferase NatB.</title>
        <authorList>
            <person name="Van Damme P."/>
            <person name="Lasa M."/>
            <person name="Polevoda B."/>
            <person name="Gazquez C."/>
            <person name="Elosegui-Artola A."/>
            <person name="Kim D.S."/>
            <person name="De Juan-Pardo E."/>
            <person name="Demeyer K."/>
            <person name="Hole K."/>
            <person name="Larrea E."/>
            <person name="Timmerman E."/>
            <person name="Prieto J."/>
            <person name="Arnesen T."/>
            <person name="Sherman F."/>
            <person name="Gevaert K."/>
            <person name="Aldabe R."/>
        </authorList>
    </citation>
    <scope>ACETYLATION [LARGE SCALE ANALYSIS] AT ALA-2</scope>
    <scope>CLEAVAGE OF INITIATOR METHIONINE [LARGE SCALE ANALYSIS]</scope>
    <scope>IDENTIFICATION BY MASS SPECTROMETRY [LARGE SCALE ANALYSIS]</scope>
</reference>
<reference key="17">
    <citation type="journal article" date="2013" name="J. Proteome Res.">
        <title>Toward a comprehensive characterization of a human cancer cell phosphoproteome.</title>
        <authorList>
            <person name="Zhou H."/>
            <person name="Di Palma S."/>
            <person name="Preisinger C."/>
            <person name="Peng M."/>
            <person name="Polat A.N."/>
            <person name="Heck A.J."/>
            <person name="Mohammed S."/>
        </authorList>
    </citation>
    <scope>PHOSPHORYLATION [LARGE SCALE ANALYSIS] AT SER-101; SER-213; SER-223; SER-416; SER-420; SER-428; THR-436; SER-441; SER-445 AND SER-459</scope>
    <scope>IDENTIFICATION BY MASS SPECTROMETRY [LARGE SCALE ANALYSIS]</scope>
    <source>
        <tissue>Cervix carcinoma</tissue>
        <tissue>Erythroleukemia</tissue>
    </source>
</reference>
<reference key="18">
    <citation type="journal article" date="2014" name="J. Proteomics">
        <title>An enzyme assisted RP-RPLC approach for in-depth analysis of human liver phosphoproteome.</title>
        <authorList>
            <person name="Bian Y."/>
            <person name="Song C."/>
            <person name="Cheng K."/>
            <person name="Dong M."/>
            <person name="Wang F."/>
            <person name="Huang J."/>
            <person name="Sun D."/>
            <person name="Wang L."/>
            <person name="Ye M."/>
            <person name="Zou H."/>
        </authorList>
    </citation>
    <scope>PHOSPHORYLATION [LARGE SCALE ANALYSIS] AT SER-101; SER-213; SER-257; SER-299; SER-416; SER-420; THR-422; THR-436 AND SER-445</scope>
    <scope>IDENTIFICATION BY MASS SPECTROMETRY [LARGE SCALE ANALYSIS]</scope>
    <source>
        <tissue>Liver</tissue>
    </source>
</reference>
<reference key="19">
    <citation type="journal article" date="2014" name="Mol. Cell. Proteomics">
        <title>Immunoaffinity enrichment and mass spectrometry analysis of protein methylation.</title>
        <authorList>
            <person name="Guo A."/>
            <person name="Gu H."/>
            <person name="Zhou J."/>
            <person name="Mulhern D."/>
            <person name="Wang Y."/>
            <person name="Lee K.A."/>
            <person name="Yang V."/>
            <person name="Aguiar M."/>
            <person name="Kornhauser J."/>
            <person name="Jia X."/>
            <person name="Ren J."/>
            <person name="Beausoleil S.A."/>
            <person name="Silva J.C."/>
            <person name="Vemulapalli V."/>
            <person name="Bedford M.T."/>
            <person name="Comb M.J."/>
        </authorList>
    </citation>
    <scope>METHYLATION [LARGE SCALE ANALYSIS] AT ARG-161 AND ARG-191</scope>
    <scope>IDENTIFICATION BY MASS SPECTROMETRY [LARGE SCALE ANALYSIS]</scope>
    <source>
        <tissue>Colon carcinoma</tissue>
    </source>
</reference>
<reference key="20">
    <citation type="journal article" date="2014" name="Proteomics">
        <title>MBD5 and MBD6 interact with the human PR-DUB complex through their methyl-CpG-binding domain.</title>
        <authorList>
            <person name="Baymaz H.I."/>
            <person name="Fournier A."/>
            <person name="Laget S."/>
            <person name="Ji Z."/>
            <person name="Jansen P.W."/>
            <person name="Smits A.H."/>
            <person name="Ferry L."/>
            <person name="Mensinga A."/>
            <person name="Poser I."/>
            <person name="Sharrocks A."/>
            <person name="Defossez P.A."/>
            <person name="Vermeulen M."/>
        </authorList>
    </citation>
    <scope>FUNCTION</scope>
    <scope>IDENTIFICATION IN THE PR-DUB COMPLEX</scope>
    <scope>IDENTIFICATION BY MASS SPECTROMETRY</scope>
</reference>
<reference key="21">
    <citation type="journal article" date="2015" name="J. Biol. Chem.">
        <title>BRCA1-associated protein 1 (BAP1) deubiquitinase antagonizes the ubiquitin-mediated activation of FoxK2 target genes.</title>
        <authorList>
            <person name="Okino Y."/>
            <person name="Machida Y."/>
            <person name="Frankland-Searby S."/>
            <person name="Machida Y.J."/>
        </authorList>
    </citation>
    <scope>INTERACTION WITH BAP1</scope>
    <scope>MUTAGENESIS OF ARG-127</scope>
</reference>
<reference key="22">
    <citation type="journal article" date="2015" name="Dev. Cell">
        <title>FOXKs promote Wnt/beta-catenin signaling by translocating DVL into the nucleus.</title>
        <authorList>
            <person name="Wang W."/>
            <person name="Li X."/>
            <person name="Lee M."/>
            <person name="Jun S."/>
            <person name="Aziz K.E."/>
            <person name="Feng L."/>
            <person name="Tran M.K."/>
            <person name="Li N."/>
            <person name="McCrea P.D."/>
            <person name="Park J.I."/>
            <person name="Chen J."/>
        </authorList>
    </citation>
    <scope>FUNCTION</scope>
    <scope>MUTAGENESIS OF HIS-355</scope>
    <scope>INTERACTION WITH DVL2 AND DVL3</scope>
    <scope>SUBCELLULAR LOCATION</scope>
</reference>
<reference key="23">
    <citation type="journal article" date="2015" name="MBio">
        <title>The transcription factor FoxK participates with Nup98 to regulate antiviral gene expression.</title>
        <authorList>
            <person name="Panda D."/>
            <person name="Gold B."/>
            <person name="Tartell M.A."/>
            <person name="Rausch K."/>
            <person name="Casas-Tinto S."/>
            <person name="Cherry S."/>
        </authorList>
    </citation>
    <scope>FUNCTION</scope>
    <scope>SUBCELLULAR LOCATION</scope>
</reference>
<reference key="24">
    <citation type="journal article" date="2019" name="Nat. Commun.">
        <title>BAP1 complex promotes transcription by opposing PRC1-mediated H2A ubiquitylation.</title>
        <authorList>
            <person name="Campagne A."/>
            <person name="Lee M.K."/>
            <person name="Zielinski D."/>
            <person name="Michaud A."/>
            <person name="Le Corre S."/>
            <person name="Dingli F."/>
            <person name="Chen H."/>
            <person name="Shahidian L.Z."/>
            <person name="Vassilev I."/>
            <person name="Servant N."/>
            <person name="Loew D."/>
            <person name="Pasmant E."/>
            <person name="Postel-Vinay S."/>
            <person name="Wassef M."/>
            <person name="Margueron R."/>
        </authorList>
    </citation>
    <scope>FUNCTION</scope>
    <scope>IDENTIFICATION IN THE PR-DUB COMPLEX</scope>
    <scope>IDENTIFICATION BY MASS SPECTROMETRY</scope>
</reference>
<sequence length="733" mass="75457">MAEVGEDSGARALLALRSAPCSPVLCAAAAAAAFPAAAPPPAPAQPQPPPGPPPPPPPPLPPGAIAGAGSSGGSSGVSGDSAVAGAAPALVAAAAASVRQSPGPALARLEGREFEFLMRQPSVTIGRNSSQGSVDLSMGLSSFISRRHLQLSFQEPHFYLRCLGKNGVFVDGAFQRRGAPALQLPKQCTFRFPSTAIKIQFTSLYHKEEAPASPLRPLYPQISPLKIHIPEPDLRSMVSPVPSPTGTISVPNSCPASPRGAGSSSYRFVQNVTSDLQLAAEFAAKAASEQQADTSGGDSPKDESKPPFSYAQLIVQAISSAQDRQLTLSGIYAHITKHYPYYRTADKGWQNSIRHNLSLNRYFIKVPRSQEEPGKGSFWRIDPASEAKLVEQAFRKRRQRGVSCFRTPFGPLSSRSAPASPTHPGLMSPRSGGLQTPECLSREGSPIPHDPEFGSKLASVPEYRYSQSAPGSPVSAQPVIMAVPPRPSSLVAKPVAYMPASIVTSQQPAGHAIHVVQQAPTVTMVRVVTTSANSANGYILTSQGAAGGSHDAAGAAVLDLGSEARGLEEKPTIAFATIPAAGGVIQTVASQMAPGVPGHTVTILQPATPVTLGQHHLPVRAVTQNGKHAVPTNSLAGNAYALTSPLQLLATQASSSAPVVVTRVCEVGPKEPAAAVAATATTTPATATTASASASSTGEPEVKRSRVEEPSGAVTTPAGVIAAAGPQGPGTGE</sequence>
<accession>P85037</accession>
<organism>
    <name type="scientific">Homo sapiens</name>
    <name type="common">Human</name>
    <dbReference type="NCBI Taxonomy" id="9606"/>
    <lineage>
        <taxon>Eukaryota</taxon>
        <taxon>Metazoa</taxon>
        <taxon>Chordata</taxon>
        <taxon>Craniata</taxon>
        <taxon>Vertebrata</taxon>
        <taxon>Euteleostomi</taxon>
        <taxon>Mammalia</taxon>
        <taxon>Eutheria</taxon>
        <taxon>Euarchontoglires</taxon>
        <taxon>Primates</taxon>
        <taxon>Haplorrhini</taxon>
        <taxon>Catarrhini</taxon>
        <taxon>Hominidae</taxon>
        <taxon>Homo</taxon>
    </lineage>
</organism>
<evidence type="ECO:0000250" key="1">
    <source>
        <dbReference type="UniProtKB" id="P42128"/>
    </source>
</evidence>
<evidence type="ECO:0000255" key="2">
    <source>
        <dbReference type="PROSITE-ProRule" id="PRU00086"/>
    </source>
</evidence>
<evidence type="ECO:0000255" key="3">
    <source>
        <dbReference type="PROSITE-ProRule" id="PRU00089"/>
    </source>
</evidence>
<evidence type="ECO:0000256" key="4">
    <source>
        <dbReference type="SAM" id="MobiDB-lite"/>
    </source>
</evidence>
<evidence type="ECO:0000269" key="5">
    <source>
    </source>
</evidence>
<evidence type="ECO:0000269" key="6">
    <source>
    </source>
</evidence>
<evidence type="ECO:0000269" key="7">
    <source>
    </source>
</evidence>
<evidence type="ECO:0000269" key="8">
    <source>
    </source>
</evidence>
<evidence type="ECO:0000269" key="9">
    <source>
    </source>
</evidence>
<evidence type="ECO:0000269" key="10">
    <source>
    </source>
</evidence>
<evidence type="ECO:0000269" key="11">
    <source>
    </source>
</evidence>
<evidence type="ECO:0000303" key="12">
    <source>
    </source>
</evidence>
<evidence type="ECO:0000303" key="13">
    <source>
    </source>
</evidence>
<evidence type="ECO:0000303" key="14">
    <source>
    </source>
</evidence>
<evidence type="ECO:0000305" key="15"/>
<evidence type="ECO:0000305" key="16">
    <source>
    </source>
</evidence>
<evidence type="ECO:0000312" key="17">
    <source>
        <dbReference type="HGNC" id="HGNC:23480"/>
    </source>
</evidence>
<evidence type="ECO:0007744" key="18">
    <source>
    </source>
</evidence>
<evidence type="ECO:0007744" key="19">
    <source>
    </source>
</evidence>
<evidence type="ECO:0007744" key="20">
    <source>
    </source>
</evidence>
<evidence type="ECO:0007744" key="21">
    <source>
    </source>
</evidence>
<evidence type="ECO:0007744" key="22">
    <source>
    </source>
</evidence>
<evidence type="ECO:0007744" key="23">
    <source>
    </source>
</evidence>
<evidence type="ECO:0007744" key="24">
    <source>
    </source>
</evidence>
<evidence type="ECO:0007744" key="25">
    <source>
    </source>
</evidence>
<evidence type="ECO:0007744" key="26">
    <source>
    </source>
</evidence>
<feature type="initiator methionine" description="Removed" evidence="20 23">
    <location>
        <position position="1"/>
    </location>
</feature>
<feature type="chain" id="PRO_0000261667" description="Forkhead box protein K1">
    <location>
        <begin position="2"/>
        <end position="733"/>
    </location>
</feature>
<feature type="domain" description="FHA" evidence="2">
    <location>
        <begin position="123"/>
        <end position="175"/>
    </location>
</feature>
<feature type="DNA-binding region" description="Fork-head" evidence="3">
    <location>
        <begin position="305"/>
        <end position="400"/>
    </location>
</feature>
<feature type="region of interest" description="Interaction with SIN3A and SIN3B" evidence="1">
    <location>
        <begin position="2"/>
        <end position="40"/>
    </location>
</feature>
<feature type="region of interest" description="Disordered" evidence="4">
    <location>
        <begin position="36"/>
        <end position="79"/>
    </location>
</feature>
<feature type="region of interest" description="Required for interaction with FOXO4 and MEF2C" evidence="1">
    <location>
        <begin position="95"/>
        <end position="420"/>
    </location>
</feature>
<feature type="region of interest" description="Disordered" evidence="4">
    <location>
        <begin position="287"/>
        <end position="306"/>
    </location>
</feature>
<feature type="region of interest" description="Disordered" evidence="4">
    <location>
        <begin position="413"/>
        <end position="436"/>
    </location>
</feature>
<feature type="region of interest" description="Disordered" evidence="4">
    <location>
        <begin position="676"/>
        <end position="733"/>
    </location>
</feature>
<feature type="compositionally biased region" description="Pro residues" evidence="4">
    <location>
        <begin position="37"/>
        <end position="62"/>
    </location>
</feature>
<feature type="compositionally biased region" description="Low complexity" evidence="4">
    <location>
        <begin position="676"/>
        <end position="697"/>
    </location>
</feature>
<feature type="compositionally biased region" description="Basic and acidic residues" evidence="4">
    <location>
        <begin position="700"/>
        <end position="709"/>
    </location>
</feature>
<feature type="modified residue" description="N-acetylalanine" evidence="20 23">
    <location>
        <position position="2"/>
    </location>
</feature>
<feature type="modified residue" description="Phosphoserine" evidence="21 24 26">
    <location>
        <position position="101"/>
    </location>
</feature>
<feature type="modified residue" description="Omega-N-methylarginine" evidence="25">
    <location>
        <position position="161"/>
    </location>
</feature>
<feature type="modified residue" description="Omega-N-methylarginine" evidence="25">
    <location>
        <position position="191"/>
    </location>
</feature>
<feature type="modified residue" description="Phosphoserine" evidence="18 19 22 24 26">
    <location>
        <position position="213"/>
    </location>
</feature>
<feature type="modified residue" description="Phosphoserine" evidence="18 19 22 24">
    <location>
        <position position="223"/>
    </location>
</feature>
<feature type="modified residue" description="Phosphoserine" evidence="19">
    <location>
        <position position="239"/>
    </location>
</feature>
<feature type="modified residue" description="Phosphoserine" evidence="19">
    <location>
        <position position="243"/>
    </location>
</feature>
<feature type="modified residue" description="Phosphothreonine" evidence="1">
    <location>
        <position position="245"/>
    </location>
</feature>
<feature type="modified residue" description="Phosphothreonine" evidence="1">
    <location>
        <position position="247"/>
    </location>
</feature>
<feature type="modified residue" description="Phosphoserine" evidence="19">
    <location>
        <position position="253"/>
    </location>
</feature>
<feature type="modified residue" description="Phosphoserine" evidence="19 26">
    <location>
        <position position="257"/>
    </location>
</feature>
<feature type="modified residue" description="Phosphoserine" evidence="1">
    <location>
        <position position="295"/>
    </location>
</feature>
<feature type="modified residue" description="Phosphoserine" evidence="21 26">
    <location>
        <position position="299"/>
    </location>
</feature>
<feature type="modified residue" description="Phosphoserine" evidence="18 19 21 24 26">
    <location>
        <position position="416"/>
    </location>
</feature>
<feature type="modified residue" description="Phosphoserine" evidence="24 26">
    <location>
        <position position="420"/>
    </location>
</feature>
<feature type="modified residue" description="Phosphothreonine" evidence="26">
    <location>
        <position position="422"/>
    </location>
</feature>
<feature type="modified residue" description="Phosphoserine" evidence="19 21 24">
    <location>
        <position position="428"/>
    </location>
</feature>
<feature type="modified residue" description="Phosphothreonine" evidence="18 24 26">
    <location>
        <position position="436"/>
    </location>
</feature>
<feature type="modified residue" description="Phosphoserine" evidence="18 19 24">
    <location>
        <position position="441"/>
    </location>
</feature>
<feature type="modified residue" description="Phosphoserine" evidence="19 21 24 26">
    <location>
        <position position="445"/>
    </location>
</feature>
<feature type="modified residue" description="Phosphoserine" evidence="24">
    <location>
        <position position="459"/>
    </location>
</feature>
<feature type="splice variant" id="VSP_052239" description="In isoform 2." evidence="13 14">
    <location>
        <begin position="1"/>
        <end position="163"/>
    </location>
</feature>
<feature type="splice variant" id="VSP_052240" description="In isoform 2." evidence="13 14">
    <original>GKNGVFVDGAFQRRGAPALQLPKQ</original>
    <variation>MAYCLGVNFVPSRFCYQLHRLLLR</variation>
    <location>
        <begin position="164"/>
        <end position="187"/>
    </location>
</feature>
<feature type="mutagenesis site" description="Reduced interaction with BAP1." evidence="8">
    <original>R</original>
    <variation>A</variation>
    <location>
        <position position="127"/>
    </location>
</feature>
<feature type="mutagenesis site" description="Reduced DNA-binding and ability to repress transcription without affecting interaction with SRF. No effect on interaction with DVL2." evidence="6 9">
    <original>H</original>
    <variation>A</variation>
    <location>
        <position position="355"/>
    </location>
</feature>
<feature type="sequence conflict" description="In Ref. 3; CB959941." evidence="15" ref="3">
    <original>I</original>
    <variation>V</variation>
    <location>
        <position position="144"/>
    </location>
</feature>
<feature type="sequence conflict" description="In Ref. 3; CB959941." evidence="15" ref="3">
    <original>QE</original>
    <variation>KS</variation>
    <location>
        <begin position="154"/>
        <end position="155"/>
    </location>
</feature>
<feature type="sequence conflict" description="In Ref. 3; CB959941." evidence="15" ref="3">
    <original>Y</original>
    <variation>S</variation>
    <location>
        <position position="159"/>
    </location>
</feature>
<feature type="sequence conflict" description="In Ref. 4; AW206906." evidence="15" ref="4">
    <original>P</original>
    <variation>A</variation>
    <location>
        <position position="217"/>
    </location>
</feature>
<feature type="sequence conflict" description="In Ref. 4; AW206906." evidence="15" ref="4">
    <original>P</original>
    <variation>T</variation>
    <location>
        <position position="232"/>
    </location>
</feature>
<feature type="sequence conflict" description="In Ref. 1; AK122663." evidence="15" ref="1">
    <location>
        <begin position="437"/>
        <end position="445"/>
    </location>
</feature>
<proteinExistence type="evidence at protein level"/>